<proteinExistence type="inferred from homology"/>
<evidence type="ECO:0000250" key="1"/>
<evidence type="ECO:0000255" key="2">
    <source>
        <dbReference type="PROSITE-ProRule" id="PRU00541"/>
    </source>
</evidence>
<evidence type="ECO:0000255" key="3">
    <source>
        <dbReference type="PROSITE-ProRule" id="PRU00542"/>
    </source>
</evidence>
<evidence type="ECO:0000255" key="4">
    <source>
        <dbReference type="PROSITE-ProRule" id="PRU00552"/>
    </source>
</evidence>
<evidence type="ECO:0000256" key="5">
    <source>
        <dbReference type="SAM" id="MobiDB-lite"/>
    </source>
</evidence>
<evidence type="ECO:0000305" key="6"/>
<sequence length="531" mass="58618">MPQVAASSSNVGPSSAAASSASHVQEVAKSASDPPKHTSFSSIGISPMLIRSLASLQIKVPTPIQSLTIPSVLEGRDLVGGAQTGSGKTLCFALPILNKLIKDMVGGFAVVLTPTRELGVQLHEQFVAVGEGARMGLRCALVLGGMDMMKQASELANLRPHVIVATPGRLVDHLRSGGGEEWGLRRCKFLVLDEADRLLTDTFKPELEYLYSVLPSAKTLQTLLFTATLTEQVVEFANAKRPEGKPAPMVCKIEMDTKTPETLEQRYVFVPSHVREPYLYHILRHPPIKPSSERVRKLNAKHQADRERKEENQRKSGKRRRTHHASDSDLDQDDDAALFLPATIIFTARCKTAATLSGMLAELGIPNVSLHSHLRQSERSENLQTFRAQRVPVLIATDVGSRGLDIPDVELVINWDLPSAWQDYVHRVGRTARNGKRGFAISFITERDIDVIHSIEDKINTKLTQLEGLEDEDKILEKLNAVATAKRVATMALHDSQFGERQQRNQHKQLARLKAEKRASKKAKSAGHDQQ</sequence>
<comment type="function">
    <text evidence="1">ATP-binding RNA helicase involved in 40S ribosomal subunit biogenesis and is required for the normal formation of 18S rRNAs through pre-rRNA processing at A0, A1 and A2 sites. Required for vegetative growth (By similarity).</text>
</comment>
<comment type="catalytic activity">
    <reaction>
        <text>ATP + H2O = ADP + phosphate + H(+)</text>
        <dbReference type="Rhea" id="RHEA:13065"/>
        <dbReference type="ChEBI" id="CHEBI:15377"/>
        <dbReference type="ChEBI" id="CHEBI:15378"/>
        <dbReference type="ChEBI" id="CHEBI:30616"/>
        <dbReference type="ChEBI" id="CHEBI:43474"/>
        <dbReference type="ChEBI" id="CHEBI:456216"/>
        <dbReference type="EC" id="3.6.4.13"/>
    </reaction>
</comment>
<comment type="subcellular location">
    <subcellularLocation>
        <location evidence="1">Nucleus</location>
        <location evidence="1">Nucleolus</location>
    </subcellularLocation>
</comment>
<comment type="domain">
    <text>The Q motif is unique to and characteristic of the DEAD box family of RNA helicases and controls ATP binding and hydrolysis.</text>
</comment>
<comment type="similarity">
    <text evidence="6">Belongs to the DEAD box helicase family. DDX49/DBP8 subfamily.</text>
</comment>
<organism>
    <name type="scientific">Mycosarcoma maydis</name>
    <name type="common">Corn smut fungus</name>
    <name type="synonym">Ustilago maydis</name>
    <dbReference type="NCBI Taxonomy" id="5270"/>
    <lineage>
        <taxon>Eukaryota</taxon>
        <taxon>Fungi</taxon>
        <taxon>Dikarya</taxon>
        <taxon>Basidiomycota</taxon>
        <taxon>Ustilaginomycotina</taxon>
        <taxon>Ustilaginomycetes</taxon>
        <taxon>Ustilaginales</taxon>
        <taxon>Ustilaginaceae</taxon>
        <taxon>Mycosarcoma</taxon>
    </lineage>
</organism>
<name>DBP8_MYCMD</name>
<accession>Q4PEX7</accession>
<accession>A0A0D1CYR2</accession>
<keyword id="KW-0067">ATP-binding</keyword>
<keyword id="KW-0347">Helicase</keyword>
<keyword id="KW-0378">Hydrolase</keyword>
<keyword id="KW-0547">Nucleotide-binding</keyword>
<keyword id="KW-0539">Nucleus</keyword>
<keyword id="KW-1185">Reference proteome</keyword>
<keyword id="KW-0690">Ribosome biogenesis</keyword>
<keyword id="KW-0694">RNA-binding</keyword>
<keyword id="KW-0698">rRNA processing</keyword>
<protein>
    <recommendedName>
        <fullName>ATP-dependent RNA helicase DBP8</fullName>
        <ecNumber>3.6.4.13</ecNumber>
    </recommendedName>
</protein>
<gene>
    <name type="primary">DBP8</name>
    <name type="ORF">UMAG_10241</name>
</gene>
<reference key="1">
    <citation type="journal article" date="2006" name="Nature">
        <title>Insights from the genome of the biotrophic fungal plant pathogen Ustilago maydis.</title>
        <authorList>
            <person name="Kaemper J."/>
            <person name="Kahmann R."/>
            <person name="Boelker M."/>
            <person name="Ma L.-J."/>
            <person name="Brefort T."/>
            <person name="Saville B.J."/>
            <person name="Banuett F."/>
            <person name="Kronstad J.W."/>
            <person name="Gold S.E."/>
            <person name="Mueller O."/>
            <person name="Perlin M.H."/>
            <person name="Woesten H.A.B."/>
            <person name="de Vries R."/>
            <person name="Ruiz-Herrera J."/>
            <person name="Reynaga-Pena C.G."/>
            <person name="Snetselaar K."/>
            <person name="McCann M."/>
            <person name="Perez-Martin J."/>
            <person name="Feldbruegge M."/>
            <person name="Basse C.W."/>
            <person name="Steinberg G."/>
            <person name="Ibeas J.I."/>
            <person name="Holloman W."/>
            <person name="Guzman P."/>
            <person name="Farman M.L."/>
            <person name="Stajich J.E."/>
            <person name="Sentandreu R."/>
            <person name="Gonzalez-Prieto J.M."/>
            <person name="Kennell J.C."/>
            <person name="Molina L."/>
            <person name="Schirawski J."/>
            <person name="Mendoza-Mendoza A."/>
            <person name="Greilinger D."/>
            <person name="Muench K."/>
            <person name="Roessel N."/>
            <person name="Scherer M."/>
            <person name="Vranes M."/>
            <person name="Ladendorf O."/>
            <person name="Vincon V."/>
            <person name="Fuchs U."/>
            <person name="Sandrock B."/>
            <person name="Meng S."/>
            <person name="Ho E.C.H."/>
            <person name="Cahill M.J."/>
            <person name="Boyce K.J."/>
            <person name="Klose J."/>
            <person name="Klosterman S.J."/>
            <person name="Deelstra H.J."/>
            <person name="Ortiz-Castellanos L."/>
            <person name="Li W."/>
            <person name="Sanchez-Alonso P."/>
            <person name="Schreier P.H."/>
            <person name="Haeuser-Hahn I."/>
            <person name="Vaupel M."/>
            <person name="Koopmann E."/>
            <person name="Friedrich G."/>
            <person name="Voss H."/>
            <person name="Schlueter T."/>
            <person name="Margolis J."/>
            <person name="Platt D."/>
            <person name="Swimmer C."/>
            <person name="Gnirke A."/>
            <person name="Chen F."/>
            <person name="Vysotskaia V."/>
            <person name="Mannhaupt G."/>
            <person name="Gueldener U."/>
            <person name="Muensterkoetter M."/>
            <person name="Haase D."/>
            <person name="Oesterheld M."/>
            <person name="Mewes H.-W."/>
            <person name="Mauceli E.W."/>
            <person name="DeCaprio D."/>
            <person name="Wade C.M."/>
            <person name="Butler J."/>
            <person name="Young S.K."/>
            <person name="Jaffe D.B."/>
            <person name="Calvo S.E."/>
            <person name="Nusbaum C."/>
            <person name="Galagan J.E."/>
            <person name="Birren B.W."/>
        </authorList>
    </citation>
    <scope>NUCLEOTIDE SEQUENCE [LARGE SCALE GENOMIC DNA]</scope>
    <source>
        <strain>DSM 14603 / FGSC 9021 / UM521</strain>
    </source>
</reference>
<reference key="2">
    <citation type="submission" date="2014-09" db="EMBL/GenBank/DDBJ databases">
        <authorList>
            <person name="Gueldener U."/>
            <person name="Muensterkoetter M."/>
            <person name="Walter M.C."/>
            <person name="Mannhaupt G."/>
            <person name="Kahmann R."/>
        </authorList>
    </citation>
    <scope>GENOME REANNOTATION</scope>
    <source>
        <strain>DSM 14603 / FGSC 9021 / UM521</strain>
    </source>
</reference>
<dbReference type="EC" id="3.6.4.13"/>
<dbReference type="EMBL" id="CM003141">
    <property type="protein sequence ID" value="KIS71438.1"/>
    <property type="molecule type" value="Genomic_DNA"/>
</dbReference>
<dbReference type="RefSeq" id="XP_011387326.1">
    <property type="nucleotide sequence ID" value="XM_011389024.1"/>
</dbReference>
<dbReference type="SMR" id="Q4PEX7"/>
<dbReference type="FunCoup" id="Q4PEX7">
    <property type="interactions" value="344"/>
</dbReference>
<dbReference type="STRING" id="237631.Q4PEX7"/>
<dbReference type="EnsemblFungi" id="KIS71438">
    <property type="protein sequence ID" value="KIS71438"/>
    <property type="gene ID" value="UMAG_10241"/>
</dbReference>
<dbReference type="GeneID" id="23566298"/>
<dbReference type="KEGG" id="uma:UMAG_10241"/>
<dbReference type="VEuPathDB" id="FungiDB:UMAG_10241"/>
<dbReference type="eggNOG" id="KOG0340">
    <property type="taxonomic scope" value="Eukaryota"/>
</dbReference>
<dbReference type="HOGENOM" id="CLU_003041_1_1_1"/>
<dbReference type="InParanoid" id="Q4PEX7"/>
<dbReference type="OrthoDB" id="10261904at2759"/>
<dbReference type="Proteomes" id="UP000000561">
    <property type="component" value="Chromosome 2"/>
</dbReference>
<dbReference type="GO" id="GO:0005730">
    <property type="term" value="C:nucleolus"/>
    <property type="evidence" value="ECO:0007669"/>
    <property type="project" value="UniProtKB-SubCell"/>
</dbReference>
<dbReference type="GO" id="GO:0005634">
    <property type="term" value="C:nucleus"/>
    <property type="evidence" value="ECO:0000318"/>
    <property type="project" value="GO_Central"/>
</dbReference>
<dbReference type="GO" id="GO:0005524">
    <property type="term" value="F:ATP binding"/>
    <property type="evidence" value="ECO:0007669"/>
    <property type="project" value="UniProtKB-KW"/>
</dbReference>
<dbReference type="GO" id="GO:0016887">
    <property type="term" value="F:ATP hydrolysis activity"/>
    <property type="evidence" value="ECO:0007669"/>
    <property type="project" value="RHEA"/>
</dbReference>
<dbReference type="GO" id="GO:0003723">
    <property type="term" value="F:RNA binding"/>
    <property type="evidence" value="ECO:0007669"/>
    <property type="project" value="UniProtKB-KW"/>
</dbReference>
<dbReference type="GO" id="GO:0003724">
    <property type="term" value="F:RNA helicase activity"/>
    <property type="evidence" value="ECO:0007669"/>
    <property type="project" value="UniProtKB-EC"/>
</dbReference>
<dbReference type="GO" id="GO:0006364">
    <property type="term" value="P:rRNA processing"/>
    <property type="evidence" value="ECO:0000318"/>
    <property type="project" value="GO_Central"/>
</dbReference>
<dbReference type="CDD" id="cd18787">
    <property type="entry name" value="SF2_C_DEAD"/>
    <property type="match status" value="1"/>
</dbReference>
<dbReference type="Gene3D" id="3.40.50.300">
    <property type="entry name" value="P-loop containing nucleotide triphosphate hydrolases"/>
    <property type="match status" value="2"/>
</dbReference>
<dbReference type="InterPro" id="IPR011545">
    <property type="entry name" value="DEAD/DEAH_box_helicase_dom"/>
</dbReference>
<dbReference type="InterPro" id="IPR050079">
    <property type="entry name" value="DEAD_box_RNA_helicase"/>
</dbReference>
<dbReference type="InterPro" id="IPR014001">
    <property type="entry name" value="Helicase_ATP-bd"/>
</dbReference>
<dbReference type="InterPro" id="IPR001650">
    <property type="entry name" value="Helicase_C-like"/>
</dbReference>
<dbReference type="InterPro" id="IPR027417">
    <property type="entry name" value="P-loop_NTPase"/>
</dbReference>
<dbReference type="InterPro" id="IPR000629">
    <property type="entry name" value="RNA-helicase_DEAD-box_CS"/>
</dbReference>
<dbReference type="InterPro" id="IPR014014">
    <property type="entry name" value="RNA_helicase_DEAD_Q_motif"/>
</dbReference>
<dbReference type="PANTHER" id="PTHR47959:SF24">
    <property type="entry name" value="ATP-DEPENDENT RNA HELICASE"/>
    <property type="match status" value="1"/>
</dbReference>
<dbReference type="PANTHER" id="PTHR47959">
    <property type="entry name" value="ATP-DEPENDENT RNA HELICASE RHLE-RELATED"/>
    <property type="match status" value="1"/>
</dbReference>
<dbReference type="Pfam" id="PF00270">
    <property type="entry name" value="DEAD"/>
    <property type="match status" value="1"/>
</dbReference>
<dbReference type="Pfam" id="PF00271">
    <property type="entry name" value="Helicase_C"/>
    <property type="match status" value="1"/>
</dbReference>
<dbReference type="SMART" id="SM00487">
    <property type="entry name" value="DEXDc"/>
    <property type="match status" value="1"/>
</dbReference>
<dbReference type="SMART" id="SM00490">
    <property type="entry name" value="HELICc"/>
    <property type="match status" value="1"/>
</dbReference>
<dbReference type="SUPFAM" id="SSF52540">
    <property type="entry name" value="P-loop containing nucleoside triphosphate hydrolases"/>
    <property type="match status" value="1"/>
</dbReference>
<dbReference type="PROSITE" id="PS00039">
    <property type="entry name" value="DEAD_ATP_HELICASE"/>
    <property type="match status" value="1"/>
</dbReference>
<dbReference type="PROSITE" id="PS51192">
    <property type="entry name" value="HELICASE_ATP_BIND_1"/>
    <property type="match status" value="1"/>
</dbReference>
<dbReference type="PROSITE" id="PS51194">
    <property type="entry name" value="HELICASE_CTER"/>
    <property type="match status" value="1"/>
</dbReference>
<dbReference type="PROSITE" id="PS51195">
    <property type="entry name" value="Q_MOTIF"/>
    <property type="match status" value="1"/>
</dbReference>
<feature type="chain" id="PRO_0000256041" description="ATP-dependent RNA helicase DBP8">
    <location>
        <begin position="1"/>
        <end position="531"/>
    </location>
</feature>
<feature type="domain" description="Helicase ATP-binding" evidence="2">
    <location>
        <begin position="69"/>
        <end position="247"/>
    </location>
</feature>
<feature type="domain" description="Helicase C-terminal" evidence="3">
    <location>
        <begin position="332"/>
        <end position="531"/>
    </location>
</feature>
<feature type="region of interest" description="Disordered" evidence="5">
    <location>
        <begin position="1"/>
        <end position="39"/>
    </location>
</feature>
<feature type="region of interest" description="Disordered" evidence="5">
    <location>
        <begin position="291"/>
        <end position="331"/>
    </location>
</feature>
<feature type="region of interest" description="Disordered" evidence="5">
    <location>
        <begin position="495"/>
        <end position="531"/>
    </location>
</feature>
<feature type="short sequence motif" description="Q motif" evidence="4">
    <location>
        <begin position="38"/>
        <end position="66"/>
    </location>
</feature>
<feature type="short sequence motif" description="DEAD box" evidence="2">
    <location>
        <begin position="193"/>
        <end position="196"/>
    </location>
</feature>
<feature type="compositionally biased region" description="Low complexity" evidence="5">
    <location>
        <begin position="1"/>
        <end position="28"/>
    </location>
</feature>
<feature type="compositionally biased region" description="Basic and acidic residues" evidence="5">
    <location>
        <begin position="291"/>
        <end position="314"/>
    </location>
</feature>
<feature type="binding site" evidence="2">
    <location>
        <begin position="82"/>
        <end position="89"/>
    </location>
    <ligand>
        <name>ATP</name>
        <dbReference type="ChEBI" id="CHEBI:30616"/>
    </ligand>
</feature>